<keyword id="KW-0067">ATP-binding</keyword>
<keyword id="KW-1003">Cell membrane</keyword>
<keyword id="KW-1015">Disulfide bond</keyword>
<keyword id="KW-0325">Glycoprotein</keyword>
<keyword id="KW-0445">Lipid transport</keyword>
<keyword id="KW-0472">Membrane</keyword>
<keyword id="KW-0496">Mitochondrion</keyword>
<keyword id="KW-0547">Nucleotide-binding</keyword>
<keyword id="KW-0597">Phosphoprotein</keyword>
<keyword id="KW-1185">Reference proteome</keyword>
<keyword id="KW-1278">Translocase</keyword>
<keyword id="KW-0812">Transmembrane</keyword>
<keyword id="KW-1133">Transmembrane helix</keyword>
<keyword id="KW-0813">Transport</keyword>
<protein>
    <recommendedName>
        <fullName evidence="7">Broad substrate specificity ATP-binding cassette transporter ABCG2</fullName>
        <ecNumber evidence="2">7.6.2.2</ecNumber>
    </recommendedName>
    <alternativeName>
        <fullName>ATP-binding cassette sub-family G member 2</fullName>
    </alternativeName>
    <alternativeName>
        <fullName>Brain multidrug resistance protein</fullName>
    </alternativeName>
    <alternativeName>
        <fullName>Urate exporter</fullName>
    </alternativeName>
    <cdAntigenName>CD338</cdAntigenName>
</protein>
<proteinExistence type="evidence at transcript level"/>
<sequence length="656" mass="72392">MSSNSYQVSIPMSKRNTNGLPGSSSNELKTSAGGAVLSFHDICYRVKVKSGFLFCRKTVEKEILTNINGIMKPGLNAILGPTGGGKSSLLDVLAARKDPHGLSGDVLINGAPRPANFKCNSGYVVQDDVVMGTLTVRENLQFSAALRLPTTMTNHEKNERINMVIQELGLDKVADSKVGTQFIRGVSGGERKRTSIAMELITDPSILFLDEPTTGLDSSTANAVLLLLKRMSKQGRTIIFSIHQPRYSIFKLFDSLTLLASGRLMFHGPAREALGYFASIGYNCEPYNNPADFFLDVINGDSSAVVLSRADRDEGAQEPEEPPEKDTPLIDKLAAFYTNSSFFKDTKVELDQFSGGRKKKKSSVYKEVTYTTSFCHQLRWISRRSFKNLLGNPQASVAQIIVTIILGLVIGAIFYDLKNDPSGIQNRAGVLFFLTTNQCFSSVSAVELLVVEKKLFIHEYISGYYRVSSYFFGKLLSDLLPMRMLPSIIFTCITYFLLGLKPAVGSFFIMMFTLMMVAYSASSMALAIAAGQSVVSVATLLMTISFVFMMIFSGLLVNLKTVVPWLSWLQYFSIPRYGFSALQYNEFLGQNFCPGLNVTTNNTCSFAICTGAEYLENQGISLSAWGLWQNHVALACMMVIFLTIAYLKLLLLKKYS</sequence>
<feature type="chain" id="PRO_0000093389" description="Broad substrate specificity ATP-binding cassette transporter ABCG2">
    <location>
        <begin position="1"/>
        <end position="656"/>
    </location>
</feature>
<feature type="topological domain" description="Cytoplasmic" evidence="3">
    <location>
        <begin position="1"/>
        <end position="394"/>
    </location>
</feature>
<feature type="transmembrane region" description="Helical" evidence="3">
    <location>
        <begin position="395"/>
        <end position="415"/>
    </location>
</feature>
<feature type="topological domain" description="Extracellular" evidence="3">
    <location>
        <begin position="416"/>
        <end position="429"/>
    </location>
</feature>
<feature type="transmembrane region" description="Helical" evidence="3">
    <location>
        <begin position="430"/>
        <end position="450"/>
    </location>
</feature>
<feature type="topological domain" description="Cytoplasmic" evidence="3">
    <location>
        <begin position="451"/>
        <end position="478"/>
    </location>
</feature>
<feature type="transmembrane region" description="Helical" evidence="3">
    <location>
        <begin position="479"/>
        <end position="498"/>
    </location>
</feature>
<feature type="topological domain" description="Extracellular" evidence="3">
    <location>
        <begin position="499"/>
        <end position="507"/>
    </location>
</feature>
<feature type="transmembrane region" description="Helical" evidence="3">
    <location>
        <begin position="508"/>
        <end position="530"/>
    </location>
</feature>
<feature type="topological domain" description="Cytoplasmic" evidence="3">
    <location>
        <begin position="531"/>
        <end position="536"/>
    </location>
</feature>
<feature type="transmembrane region" description="Helical" evidence="3">
    <location>
        <begin position="537"/>
        <end position="557"/>
    </location>
</feature>
<feature type="topological domain" description="Extracellular" evidence="3">
    <location>
        <begin position="558"/>
        <end position="631"/>
    </location>
</feature>
<feature type="transmembrane region" description="Helical" evidence="3">
    <location>
        <begin position="632"/>
        <end position="652"/>
    </location>
</feature>
<feature type="topological domain" description="Cytoplasmic" evidence="3">
    <location>
        <begin position="653"/>
        <end position="656"/>
    </location>
</feature>
<feature type="domain" description="ABC transporter" evidence="4">
    <location>
        <begin position="37"/>
        <end position="286"/>
    </location>
</feature>
<feature type="domain" description="ABC transmembrane type-2">
    <location>
        <begin position="390"/>
        <end position="652"/>
    </location>
</feature>
<feature type="region of interest" description="Disordered" evidence="5">
    <location>
        <begin position="1"/>
        <end position="25"/>
    </location>
</feature>
<feature type="binding site" evidence="4">
    <location>
        <begin position="80"/>
        <end position="87"/>
    </location>
    <ligand>
        <name>ATP</name>
        <dbReference type="ChEBI" id="CHEBI:30616"/>
    </ligand>
</feature>
<feature type="binding site" evidence="2">
    <location>
        <begin position="184"/>
        <end position="190"/>
    </location>
    <ligand>
        <name>ATP</name>
        <dbReference type="ChEBI" id="CHEBI:30616"/>
    </ligand>
</feature>
<feature type="binding site" evidence="2">
    <location>
        <position position="211"/>
    </location>
    <ligand>
        <name>ATP</name>
        <dbReference type="ChEBI" id="CHEBI:30616"/>
    </ligand>
</feature>
<feature type="binding site" evidence="2">
    <location>
        <position position="243"/>
    </location>
    <ligand>
        <name>ATP</name>
        <dbReference type="ChEBI" id="CHEBI:30616"/>
    </ligand>
</feature>
<feature type="glycosylation site" description="N-linked (GlcNAc...) asparagine" evidence="3">
    <location>
        <position position="597"/>
    </location>
</feature>
<feature type="glycosylation site" description="N-linked (GlcNAc...) asparagine" evidence="3">
    <location>
        <position position="601"/>
    </location>
</feature>
<feature type="disulfide bond" evidence="2">
    <location>
        <begin position="593"/>
        <end position="609"/>
    </location>
</feature>
<feature type="disulfide bond" description="Interchain" evidence="2">
    <location>
        <position position="604"/>
    </location>
</feature>
<evidence type="ECO:0000250" key="1">
    <source>
        <dbReference type="UniProtKB" id="Q7TMS5"/>
    </source>
</evidence>
<evidence type="ECO:0000250" key="2">
    <source>
        <dbReference type="UniProtKB" id="Q9UNQ0"/>
    </source>
</evidence>
<evidence type="ECO:0000255" key="3"/>
<evidence type="ECO:0000255" key="4">
    <source>
        <dbReference type="PROSITE-ProRule" id="PRU00434"/>
    </source>
</evidence>
<evidence type="ECO:0000256" key="5">
    <source>
        <dbReference type="SAM" id="MobiDB-lite"/>
    </source>
</evidence>
<evidence type="ECO:0000269" key="6">
    <source>
    </source>
</evidence>
<evidence type="ECO:0000305" key="7"/>
<accession>Q8MIB3</accession>
<comment type="function">
    <text evidence="1 2 6">Broad substrate specificity ATP-dependent transporter of the ATP-binding cassette (ABC) family that actively extrudes a wide variety of physiological compounds, dietary toxins and xenobiotics from cells. Involved in porphyrin homeostasis, mediating the export of protoporphyrin IX (PPIX) from both mitochondria to cytosol and cytosol to extracellular space, it also functions in the cellular export of heme. Also mediates the efflux of sphingosine-1-P from cells. Acts as a urate exporter functioning in both renal and extrarenal urate excretion (By similarity). In kidney, it also functions as a physiological exporter of the uremic toxin indoxyl sulfate (By similarity). Also involved in the excretion of steroids like estrone 3-sulfate/E1S, 3beta-sulfooxy-androst-5-en-17-one/DHEAS, and other sulfate conjugates (By similarity). Mediates the secretion of the riboflavin and biotin vitamins into milk. Extrudes pheophorbide a, a phototoxic porphyrin catabolite of chlorophyll, reducing its bioavailability (By similarity). Plays an important role in the exclusion of xenobiotics from the brain (PubMed:12054514). It confers to cells a resistance to multiple drugs and other xenobiotics including mitoxantrone, pheophorbide, camptothecin, methotrexate, azidothymidine, and the anthracyclines daunorubicin and doxorubicin, through the control of their efflux (By similarity). In placenta, it limits the penetration of drugs from the maternal plasma into the fetus. May play a role in early stem cell self-renewal by blocking differentiation (By similarity). In inflammatory macrophages, exports itaconate from the cytosol to the extracellular compartment and limits the activation of TFEB-dependent lysosome biogenesis involved in antibacterial innate immune response.</text>
</comment>
<comment type="catalytic activity">
    <reaction evidence="2">
        <text>ATP + H2O + xenobioticSide 1 = ADP + phosphate + xenobioticSide 2.</text>
        <dbReference type="EC" id="7.6.2.2"/>
    </reaction>
</comment>
<comment type="catalytic activity">
    <reaction evidence="2">
        <text>urate(in) + ATP + H2O = urate(out) + ADP + phosphate + H(+)</text>
        <dbReference type="Rhea" id="RHEA:16461"/>
        <dbReference type="ChEBI" id="CHEBI:15377"/>
        <dbReference type="ChEBI" id="CHEBI:15378"/>
        <dbReference type="ChEBI" id="CHEBI:17775"/>
        <dbReference type="ChEBI" id="CHEBI:30616"/>
        <dbReference type="ChEBI" id="CHEBI:43474"/>
        <dbReference type="ChEBI" id="CHEBI:456216"/>
    </reaction>
    <physiologicalReaction direction="left-to-right" evidence="2">
        <dbReference type="Rhea" id="RHEA:16462"/>
    </physiologicalReaction>
</comment>
<comment type="catalytic activity">
    <reaction evidence="1">
        <text>indoxyl sulfate(in) + ATP + H2O = indoxyl sulfate(out) + ADP + phosphate + H(+)</text>
        <dbReference type="Rhea" id="RHEA:61332"/>
        <dbReference type="ChEBI" id="CHEBI:15377"/>
        <dbReference type="ChEBI" id="CHEBI:15378"/>
        <dbReference type="ChEBI" id="CHEBI:30616"/>
        <dbReference type="ChEBI" id="CHEBI:43474"/>
        <dbReference type="ChEBI" id="CHEBI:144643"/>
        <dbReference type="ChEBI" id="CHEBI:456216"/>
    </reaction>
    <physiologicalReaction direction="left-to-right" evidence="1">
        <dbReference type="Rhea" id="RHEA:61333"/>
    </physiologicalReaction>
</comment>
<comment type="catalytic activity">
    <reaction evidence="2">
        <text>sphing-4-enine 1-phosphate(in) + ATP + H2O = sphing-4-enine 1-phosphate(out) + ADP + phosphate + H(+)</text>
        <dbReference type="Rhea" id="RHEA:38951"/>
        <dbReference type="ChEBI" id="CHEBI:15377"/>
        <dbReference type="ChEBI" id="CHEBI:15378"/>
        <dbReference type="ChEBI" id="CHEBI:30616"/>
        <dbReference type="ChEBI" id="CHEBI:43474"/>
        <dbReference type="ChEBI" id="CHEBI:60119"/>
        <dbReference type="ChEBI" id="CHEBI:456216"/>
    </reaction>
    <physiologicalReaction direction="left-to-right" evidence="2">
        <dbReference type="Rhea" id="RHEA:38952"/>
    </physiologicalReaction>
</comment>
<comment type="catalytic activity">
    <reaction evidence="2">
        <text>estrone 3-sulfate(in) + ATP + H2O = estrone 3-sulfate(out) + ADP + phosphate + H(+)</text>
        <dbReference type="Rhea" id="RHEA:61348"/>
        <dbReference type="ChEBI" id="CHEBI:15377"/>
        <dbReference type="ChEBI" id="CHEBI:15378"/>
        <dbReference type="ChEBI" id="CHEBI:30616"/>
        <dbReference type="ChEBI" id="CHEBI:43474"/>
        <dbReference type="ChEBI" id="CHEBI:60050"/>
        <dbReference type="ChEBI" id="CHEBI:456216"/>
    </reaction>
    <physiologicalReaction direction="left-to-right" evidence="2">
        <dbReference type="Rhea" id="RHEA:61349"/>
    </physiologicalReaction>
</comment>
<comment type="catalytic activity">
    <reaction evidence="2">
        <text>dehydroepiandrosterone 3-sulfate(in) + ATP + H2O = dehydroepiandrosterone 3-sulfate(out) + ADP + phosphate + H(+)</text>
        <dbReference type="Rhea" id="RHEA:61364"/>
        <dbReference type="ChEBI" id="CHEBI:15377"/>
        <dbReference type="ChEBI" id="CHEBI:15378"/>
        <dbReference type="ChEBI" id="CHEBI:30616"/>
        <dbReference type="ChEBI" id="CHEBI:43474"/>
        <dbReference type="ChEBI" id="CHEBI:57905"/>
        <dbReference type="ChEBI" id="CHEBI:456216"/>
    </reaction>
    <physiologicalReaction direction="left-to-right" evidence="2">
        <dbReference type="Rhea" id="RHEA:61365"/>
    </physiologicalReaction>
</comment>
<comment type="catalytic activity">
    <reaction evidence="2">
        <text>4-methylumbelliferone sulfate(in) + ATP + H2O = 4-methylumbelliferone sulfate(out) + ADP + phosphate + H(+)</text>
        <dbReference type="Rhea" id="RHEA:61368"/>
        <dbReference type="ChEBI" id="CHEBI:15377"/>
        <dbReference type="ChEBI" id="CHEBI:15378"/>
        <dbReference type="ChEBI" id="CHEBI:30616"/>
        <dbReference type="ChEBI" id="CHEBI:43474"/>
        <dbReference type="ChEBI" id="CHEBI:144581"/>
        <dbReference type="ChEBI" id="CHEBI:456216"/>
    </reaction>
    <physiologicalReaction direction="left-to-right" evidence="2">
        <dbReference type="Rhea" id="RHEA:61369"/>
    </physiologicalReaction>
</comment>
<comment type="catalytic activity">
    <reaction evidence="2">
        <text>5,7-dimethyl-2-methylamino-4-(3-pyridylmethyl)-1,3-benzothiazol-6-yl beta-D-glucuronate(in) + ATP + H2O = 5,7-dimethyl-2-methylamino-4-(3-pyridylmethyl)-1,3-benzothiazol-6-yl beta-D-glucuronate(out) + ADP + phosphate + H(+)</text>
        <dbReference type="Rhea" id="RHEA:61384"/>
        <dbReference type="ChEBI" id="CHEBI:15377"/>
        <dbReference type="ChEBI" id="CHEBI:15378"/>
        <dbReference type="ChEBI" id="CHEBI:30616"/>
        <dbReference type="ChEBI" id="CHEBI:43474"/>
        <dbReference type="ChEBI" id="CHEBI:144584"/>
        <dbReference type="ChEBI" id="CHEBI:456216"/>
    </reaction>
    <physiologicalReaction direction="left-to-right" evidence="2">
        <dbReference type="Rhea" id="RHEA:61385"/>
    </physiologicalReaction>
</comment>
<comment type="catalytic activity">
    <reaction evidence="2">
        <text>4-methylumbelliferone beta-D-glucuronate(in) + ATP + H2O = 4-methylumbelliferone beta-D-glucuronate(out) + ADP + phosphate + H(+)</text>
        <dbReference type="Rhea" id="RHEA:61372"/>
        <dbReference type="ChEBI" id="CHEBI:15377"/>
        <dbReference type="ChEBI" id="CHEBI:15378"/>
        <dbReference type="ChEBI" id="CHEBI:30616"/>
        <dbReference type="ChEBI" id="CHEBI:43474"/>
        <dbReference type="ChEBI" id="CHEBI:144582"/>
        <dbReference type="ChEBI" id="CHEBI:456216"/>
    </reaction>
    <physiologicalReaction direction="left-to-right" evidence="2">
        <dbReference type="Rhea" id="RHEA:61373"/>
    </physiologicalReaction>
</comment>
<comment type="catalytic activity">
    <reaction evidence="2">
        <text>5,7-dimethyl-2-methylamino-4-(3-pyridylmethyl)-1,3-benzothiazol-6-yl sulfate(in) + ATP + H2O = 5,7-dimethyl-2-methylamino-4-(3-pyridylmethyl)-1,3-benzothiazol-6-yl sulfate(out) + ADP + phosphate + H(+)</text>
        <dbReference type="Rhea" id="RHEA:61376"/>
        <dbReference type="ChEBI" id="CHEBI:15377"/>
        <dbReference type="ChEBI" id="CHEBI:15378"/>
        <dbReference type="ChEBI" id="CHEBI:30616"/>
        <dbReference type="ChEBI" id="CHEBI:43474"/>
        <dbReference type="ChEBI" id="CHEBI:144583"/>
        <dbReference type="ChEBI" id="CHEBI:456216"/>
    </reaction>
    <physiologicalReaction direction="left-to-right" evidence="2">
        <dbReference type="Rhea" id="RHEA:61377"/>
    </physiologicalReaction>
</comment>
<comment type="catalytic activity">
    <reaction evidence="2">
        <text>17beta-estradiol 17-O-(beta-D-glucuronate)(in) + ATP + H2O = 17beta-estradiol 17-O-(beta-D-glucuronate)(out) + ADP + phosphate + H(+)</text>
        <dbReference type="Rhea" id="RHEA:60128"/>
        <dbReference type="ChEBI" id="CHEBI:15377"/>
        <dbReference type="ChEBI" id="CHEBI:15378"/>
        <dbReference type="ChEBI" id="CHEBI:30616"/>
        <dbReference type="ChEBI" id="CHEBI:43474"/>
        <dbReference type="ChEBI" id="CHEBI:82961"/>
        <dbReference type="ChEBI" id="CHEBI:456216"/>
    </reaction>
    <physiologicalReaction direction="left-to-right" evidence="2">
        <dbReference type="Rhea" id="RHEA:60129"/>
    </physiologicalReaction>
</comment>
<comment type="catalytic activity">
    <reaction evidence="2">
        <text>methotrexate(in) + ATP + H2O = methotrexate(out) + ADP + phosphate + H(+)</text>
        <dbReference type="Rhea" id="RHEA:61356"/>
        <dbReference type="ChEBI" id="CHEBI:15377"/>
        <dbReference type="ChEBI" id="CHEBI:15378"/>
        <dbReference type="ChEBI" id="CHEBI:30616"/>
        <dbReference type="ChEBI" id="CHEBI:43474"/>
        <dbReference type="ChEBI" id="CHEBI:50681"/>
        <dbReference type="ChEBI" id="CHEBI:456216"/>
    </reaction>
    <physiologicalReaction direction="left-to-right" evidence="2">
        <dbReference type="Rhea" id="RHEA:61357"/>
    </physiologicalReaction>
</comment>
<comment type="catalytic activity">
    <reaction evidence="1">
        <text>riboflavin(in) + ATP + H2O = riboflavin(out) + ADP + phosphate + H(+)</text>
        <dbReference type="Rhea" id="RHEA:61352"/>
        <dbReference type="ChEBI" id="CHEBI:15377"/>
        <dbReference type="ChEBI" id="CHEBI:15378"/>
        <dbReference type="ChEBI" id="CHEBI:30616"/>
        <dbReference type="ChEBI" id="CHEBI:43474"/>
        <dbReference type="ChEBI" id="CHEBI:57986"/>
        <dbReference type="ChEBI" id="CHEBI:456216"/>
    </reaction>
    <physiologicalReaction direction="left-to-right" evidence="1">
        <dbReference type="Rhea" id="RHEA:61353"/>
    </physiologicalReaction>
</comment>
<comment type="catalytic activity">
    <reaction evidence="1">
        <text>pheophorbide a(in) + ATP + H2O = pheophorbide a(out) + ADP + phosphate + H(+)</text>
        <dbReference type="Rhea" id="RHEA:61360"/>
        <dbReference type="ChEBI" id="CHEBI:15377"/>
        <dbReference type="ChEBI" id="CHEBI:15378"/>
        <dbReference type="ChEBI" id="CHEBI:30616"/>
        <dbReference type="ChEBI" id="CHEBI:43474"/>
        <dbReference type="ChEBI" id="CHEBI:58687"/>
        <dbReference type="ChEBI" id="CHEBI:456216"/>
    </reaction>
    <physiologicalReaction direction="left-to-right" evidence="1">
        <dbReference type="Rhea" id="RHEA:61361"/>
    </physiologicalReaction>
</comment>
<comment type="catalytic activity">
    <reaction evidence="1 2">
        <text>itaconate(in) + ATP + H2O = itaconate(out) + ADP + phosphate + H(+)</text>
        <dbReference type="Rhea" id="RHEA:82291"/>
        <dbReference type="ChEBI" id="CHEBI:15377"/>
        <dbReference type="ChEBI" id="CHEBI:15378"/>
        <dbReference type="ChEBI" id="CHEBI:17240"/>
        <dbReference type="ChEBI" id="CHEBI:30616"/>
        <dbReference type="ChEBI" id="CHEBI:43474"/>
        <dbReference type="ChEBI" id="CHEBI:456216"/>
    </reaction>
    <physiologicalReaction direction="left-to-right" evidence="1 2">
        <dbReference type="Rhea" id="RHEA:82292"/>
    </physiologicalReaction>
</comment>
<comment type="subunit">
    <text evidence="2">Homodimer; disulfide-linked. The minimal functional unit is a homodimer, but the major oligomeric form in plasma membrane is a homotetramer with possibility of higher order oligomerization up to homododecamers.</text>
</comment>
<comment type="subcellular location">
    <subcellularLocation>
        <location evidence="2">Cell membrane</location>
        <topology evidence="3">Multi-pass membrane protein</topology>
    </subcellularLocation>
    <subcellularLocation>
        <location evidence="2">Apical cell membrane</location>
        <topology evidence="3">Multi-pass membrane protein</topology>
    </subcellularLocation>
    <subcellularLocation>
        <location evidence="2">Mitochondrion membrane</location>
        <topology evidence="3">Multi-pass membrane protein</topology>
    </subcellularLocation>
    <text evidence="2">Enriched in membrane lipid rafts.</text>
</comment>
<comment type="tissue specificity">
    <text evidence="6">High expression in brain, kidney and lung. Also expressed in livere, colon, small intestine, heart, skeletal muscle, spleen, stomach and pancreas.</text>
</comment>
<comment type="domain">
    <text evidence="2">The extracellular loop 3 (ECL3) is involved in binding porphyrins and transfer them to other carriers, probably albumin.</text>
</comment>
<comment type="PTM">
    <text evidence="2">N-glycosylated. Glycosylation-deficient ABCG2 is normally expressed and functional.</text>
</comment>
<comment type="PTM">
    <text evidence="2">Phosphorylated. Phosphorylation may regulate the localization to the plasma membrane, the homooligomerization and therefore, the activity of the transporter.</text>
</comment>
<comment type="similarity">
    <text evidence="7">Belongs to the ABC transporter superfamily. ABCG family. Eye pigment precursor importer (TC 3.A.1.204) subfamily.</text>
</comment>
<name>ABCG2_PIG</name>
<organism>
    <name type="scientific">Sus scrofa</name>
    <name type="common">Pig</name>
    <dbReference type="NCBI Taxonomy" id="9823"/>
    <lineage>
        <taxon>Eukaryota</taxon>
        <taxon>Metazoa</taxon>
        <taxon>Chordata</taxon>
        <taxon>Craniata</taxon>
        <taxon>Vertebrata</taxon>
        <taxon>Euteleostomi</taxon>
        <taxon>Mammalia</taxon>
        <taxon>Eutheria</taxon>
        <taxon>Laurasiatheria</taxon>
        <taxon>Artiodactyla</taxon>
        <taxon>Suina</taxon>
        <taxon>Suidae</taxon>
        <taxon>Sus</taxon>
    </lineage>
</organism>
<gene>
    <name type="primary">ABCG2</name>
    <name type="synonym">BMDP</name>
</gene>
<dbReference type="EC" id="7.6.2.2" evidence="2"/>
<dbReference type="EMBL" id="AJ420927">
    <property type="protein sequence ID" value="CAD12785.1"/>
    <property type="molecule type" value="mRNA"/>
</dbReference>
<dbReference type="PIR" id="JC7860">
    <property type="entry name" value="JC7860"/>
</dbReference>
<dbReference type="RefSeq" id="NP_999175.1">
    <property type="nucleotide sequence ID" value="NM_214010.1"/>
</dbReference>
<dbReference type="SMR" id="Q8MIB3"/>
<dbReference type="FunCoup" id="Q8MIB3">
    <property type="interactions" value="35"/>
</dbReference>
<dbReference type="STRING" id="9823.ENSSSCP00000029272"/>
<dbReference type="GlyCosmos" id="Q8MIB3">
    <property type="glycosylation" value="2 sites, No reported glycans"/>
</dbReference>
<dbReference type="GlyGen" id="Q8MIB3">
    <property type="glycosylation" value="2 sites"/>
</dbReference>
<dbReference type="PaxDb" id="9823-ENSSSCP00000028560"/>
<dbReference type="PeptideAtlas" id="Q8MIB3"/>
<dbReference type="Ensembl" id="ENSSSCT00070029011.1">
    <property type="protein sequence ID" value="ENSSSCP00070024187.1"/>
    <property type="gene ID" value="ENSSSCG00070014755.1"/>
</dbReference>
<dbReference type="Ensembl" id="ENSSSCT00105055563">
    <property type="protein sequence ID" value="ENSSSCP00105039212"/>
    <property type="gene ID" value="ENSSSCG00105029103"/>
</dbReference>
<dbReference type="GeneID" id="397073"/>
<dbReference type="KEGG" id="ssc:397073"/>
<dbReference type="CTD" id="735312"/>
<dbReference type="eggNOG" id="KOG0061">
    <property type="taxonomic scope" value="Eukaryota"/>
</dbReference>
<dbReference type="InParanoid" id="Q8MIB3"/>
<dbReference type="OMA" id="MCVNGFM"/>
<dbReference type="OrthoDB" id="66620at2759"/>
<dbReference type="Reactome" id="R-SSC-1660661">
    <property type="pathway name" value="Sphingolipid de novo biosynthesis"/>
</dbReference>
<dbReference type="Reactome" id="R-SSC-189451">
    <property type="pathway name" value="Heme biosynthesis"/>
</dbReference>
<dbReference type="Reactome" id="R-SSC-189483">
    <property type="pathway name" value="Heme degradation"/>
</dbReference>
<dbReference type="Reactome" id="R-SSC-917937">
    <property type="pathway name" value="Iron uptake and transport"/>
</dbReference>
<dbReference type="Reactome" id="R-SSC-9753281">
    <property type="pathway name" value="Paracetamol ADME"/>
</dbReference>
<dbReference type="Reactome" id="R-SSC-9793528">
    <property type="pathway name" value="Ciprofloxacin ADME"/>
</dbReference>
<dbReference type="ChiTaRS" id="ABCG2">
    <property type="organism name" value="pig"/>
</dbReference>
<dbReference type="Proteomes" id="UP000008227">
    <property type="component" value="Unplaced"/>
</dbReference>
<dbReference type="Proteomes" id="UP000314985">
    <property type="component" value="Chromosome 8"/>
</dbReference>
<dbReference type="Proteomes" id="UP000694570">
    <property type="component" value="Unplaced"/>
</dbReference>
<dbReference type="Proteomes" id="UP000694571">
    <property type="component" value="Unplaced"/>
</dbReference>
<dbReference type="Proteomes" id="UP000694720">
    <property type="component" value="Unplaced"/>
</dbReference>
<dbReference type="Proteomes" id="UP000694722">
    <property type="component" value="Unplaced"/>
</dbReference>
<dbReference type="Proteomes" id="UP000694723">
    <property type="component" value="Unplaced"/>
</dbReference>
<dbReference type="Proteomes" id="UP000694724">
    <property type="component" value="Unplaced"/>
</dbReference>
<dbReference type="Proteomes" id="UP000694725">
    <property type="component" value="Unplaced"/>
</dbReference>
<dbReference type="Proteomes" id="UP000694726">
    <property type="component" value="Unplaced"/>
</dbReference>
<dbReference type="Proteomes" id="UP000694727">
    <property type="component" value="Unplaced"/>
</dbReference>
<dbReference type="Proteomes" id="UP000694728">
    <property type="component" value="Unplaced"/>
</dbReference>
<dbReference type="Bgee" id="ENSSSCG00000009215">
    <property type="expression patterns" value="Expressed in ileum and 41 other cell types or tissues"/>
</dbReference>
<dbReference type="ExpressionAtlas" id="Q8MIB3">
    <property type="expression patterns" value="baseline and differential"/>
</dbReference>
<dbReference type="GO" id="GO:0016324">
    <property type="term" value="C:apical plasma membrane"/>
    <property type="evidence" value="ECO:0000250"/>
    <property type="project" value="UniProtKB"/>
</dbReference>
<dbReference type="GO" id="GO:0031526">
    <property type="term" value="C:brush border membrane"/>
    <property type="evidence" value="ECO:0000250"/>
    <property type="project" value="UniProtKB"/>
</dbReference>
<dbReference type="GO" id="GO:0045121">
    <property type="term" value="C:membrane raft"/>
    <property type="evidence" value="ECO:0000250"/>
    <property type="project" value="UniProtKB"/>
</dbReference>
<dbReference type="GO" id="GO:0031966">
    <property type="term" value="C:mitochondrial membrane"/>
    <property type="evidence" value="ECO:0007669"/>
    <property type="project" value="UniProtKB-SubCell"/>
</dbReference>
<dbReference type="GO" id="GO:0005886">
    <property type="term" value="C:plasma membrane"/>
    <property type="evidence" value="ECO:0000318"/>
    <property type="project" value="GO_Central"/>
</dbReference>
<dbReference type="GO" id="GO:0008559">
    <property type="term" value="F:ABC-type xenobiotic transporter activity"/>
    <property type="evidence" value="ECO:0007669"/>
    <property type="project" value="UniProtKB-EC"/>
</dbReference>
<dbReference type="GO" id="GO:0005524">
    <property type="term" value="F:ATP binding"/>
    <property type="evidence" value="ECO:0007669"/>
    <property type="project" value="UniProtKB-KW"/>
</dbReference>
<dbReference type="GO" id="GO:0016887">
    <property type="term" value="F:ATP hydrolysis activity"/>
    <property type="evidence" value="ECO:0007669"/>
    <property type="project" value="InterPro"/>
</dbReference>
<dbReference type="GO" id="GO:0042626">
    <property type="term" value="F:ATPase-coupled transmembrane transporter activity"/>
    <property type="evidence" value="ECO:0000250"/>
    <property type="project" value="UniProtKB"/>
</dbReference>
<dbReference type="GO" id="GO:0015225">
    <property type="term" value="F:biotin transmembrane transporter activity"/>
    <property type="evidence" value="ECO:0000250"/>
    <property type="project" value="UniProtKB"/>
</dbReference>
<dbReference type="GO" id="GO:0015562">
    <property type="term" value="F:efflux transmembrane transporter activity"/>
    <property type="evidence" value="ECO:0000250"/>
    <property type="project" value="UniProtKB"/>
</dbReference>
<dbReference type="GO" id="GO:0032217">
    <property type="term" value="F:riboflavin transmembrane transporter activity"/>
    <property type="evidence" value="ECO:0000250"/>
    <property type="project" value="UniProtKB"/>
</dbReference>
<dbReference type="GO" id="GO:0015143">
    <property type="term" value="F:urate transmembrane transporter activity"/>
    <property type="evidence" value="ECO:0000250"/>
    <property type="project" value="UniProtKB"/>
</dbReference>
<dbReference type="GO" id="GO:0015878">
    <property type="term" value="P:biotin transport"/>
    <property type="evidence" value="ECO:0000250"/>
    <property type="project" value="UniProtKB"/>
</dbReference>
<dbReference type="GO" id="GO:0006869">
    <property type="term" value="P:lipid transport"/>
    <property type="evidence" value="ECO:0007669"/>
    <property type="project" value="UniProtKB-KW"/>
</dbReference>
<dbReference type="GO" id="GO:0097744">
    <property type="term" value="P:renal urate salt excretion"/>
    <property type="evidence" value="ECO:0000250"/>
    <property type="project" value="UniProtKB"/>
</dbReference>
<dbReference type="GO" id="GO:0032218">
    <property type="term" value="P:riboflavin transport"/>
    <property type="evidence" value="ECO:0000250"/>
    <property type="project" value="UniProtKB"/>
</dbReference>
<dbReference type="GO" id="GO:0055085">
    <property type="term" value="P:transmembrane transport"/>
    <property type="evidence" value="ECO:0000250"/>
    <property type="project" value="UniProtKB"/>
</dbReference>
<dbReference type="CDD" id="cd03213">
    <property type="entry name" value="ABCG_EPDR"/>
    <property type="match status" value="1"/>
</dbReference>
<dbReference type="FunFam" id="3.40.50.300:FF:000622">
    <property type="entry name" value="ATP-binding cassette sub-family G member 2"/>
    <property type="match status" value="1"/>
</dbReference>
<dbReference type="Gene3D" id="3.40.50.300">
    <property type="entry name" value="P-loop containing nucleotide triphosphate hydrolases"/>
    <property type="match status" value="1"/>
</dbReference>
<dbReference type="InterPro" id="IPR003593">
    <property type="entry name" value="AAA+_ATPase"/>
</dbReference>
<dbReference type="InterPro" id="IPR013525">
    <property type="entry name" value="ABC2_TM"/>
</dbReference>
<dbReference type="InterPro" id="IPR003439">
    <property type="entry name" value="ABC_transporter-like_ATP-bd"/>
</dbReference>
<dbReference type="InterPro" id="IPR043926">
    <property type="entry name" value="ABCG_dom"/>
</dbReference>
<dbReference type="InterPro" id="IPR027417">
    <property type="entry name" value="P-loop_NTPase"/>
</dbReference>
<dbReference type="PANTHER" id="PTHR19241">
    <property type="entry name" value="ATP-BINDING CASSETTE TRANSPORTER"/>
    <property type="match status" value="1"/>
</dbReference>
<dbReference type="Pfam" id="PF01061">
    <property type="entry name" value="ABC2_membrane"/>
    <property type="match status" value="1"/>
</dbReference>
<dbReference type="Pfam" id="PF19055">
    <property type="entry name" value="ABC2_membrane_7"/>
    <property type="match status" value="1"/>
</dbReference>
<dbReference type="Pfam" id="PF00005">
    <property type="entry name" value="ABC_tran"/>
    <property type="match status" value="1"/>
</dbReference>
<dbReference type="SMART" id="SM00382">
    <property type="entry name" value="AAA"/>
    <property type="match status" value="1"/>
</dbReference>
<dbReference type="SUPFAM" id="SSF52540">
    <property type="entry name" value="P-loop containing nucleoside triphosphate hydrolases"/>
    <property type="match status" value="1"/>
</dbReference>
<dbReference type="PROSITE" id="PS50893">
    <property type="entry name" value="ABC_TRANSPORTER_2"/>
    <property type="match status" value="1"/>
</dbReference>
<reference key="1">
    <citation type="journal article" date="2002" name="Biochem. Biophys. Res. Commun.">
        <title>A new multidrug resistance protein at the blood-brain barrier.</title>
        <authorList>
            <person name="Eisenblaetter T."/>
            <person name="Galla H.-J."/>
        </authorList>
    </citation>
    <scope>NUCLEOTIDE SEQUENCE [MRNA]</scope>
    <scope>FUNCTION</scope>
    <scope>TISSUE SPECIFICITY</scope>
</reference>